<reference key="1">
    <citation type="submission" date="2007-11" db="EMBL/GenBank/DDBJ databases">
        <title>Complete sequence of Petroga mobilis SJ95.</title>
        <authorList>
            <consortium name="US DOE Joint Genome Institute"/>
            <person name="Copeland A."/>
            <person name="Lucas S."/>
            <person name="Lapidus A."/>
            <person name="Barry K."/>
            <person name="Glavina del Rio T."/>
            <person name="Dalin E."/>
            <person name="Tice H."/>
            <person name="Pitluck S."/>
            <person name="Meincke L."/>
            <person name="Brettin T."/>
            <person name="Bruce D."/>
            <person name="Detter J.C."/>
            <person name="Han C."/>
            <person name="Kuske C.R."/>
            <person name="Schmutz J."/>
            <person name="Larimer F."/>
            <person name="Land M."/>
            <person name="Hauser L."/>
            <person name="Kyrpides N."/>
            <person name="Mikhailova N."/>
            <person name="Noll K."/>
            <person name="Richardson P."/>
        </authorList>
    </citation>
    <scope>NUCLEOTIDE SEQUENCE [LARGE SCALE GENOMIC DNA]</scope>
    <source>
        <strain>DSM 10674 / SJ95</strain>
    </source>
</reference>
<organism>
    <name type="scientific">Petrotoga mobilis (strain DSM 10674 / SJ95)</name>
    <dbReference type="NCBI Taxonomy" id="403833"/>
    <lineage>
        <taxon>Bacteria</taxon>
        <taxon>Thermotogati</taxon>
        <taxon>Thermotogota</taxon>
        <taxon>Thermotogae</taxon>
        <taxon>Petrotogales</taxon>
        <taxon>Petrotogaceae</taxon>
        <taxon>Petrotoga</taxon>
    </lineage>
</organism>
<protein>
    <recommendedName>
        <fullName evidence="1">Enolase</fullName>
        <ecNumber evidence="1">4.2.1.11</ecNumber>
    </recommendedName>
    <alternativeName>
        <fullName evidence="1">2-phospho-D-glycerate hydro-lyase</fullName>
    </alternativeName>
    <alternativeName>
        <fullName evidence="1">2-phosphoglycerate dehydratase</fullName>
    </alternativeName>
</protein>
<comment type="function">
    <text evidence="1">Catalyzes the reversible conversion of 2-phosphoglycerate (2-PG) into phosphoenolpyruvate (PEP). It is essential for the degradation of carbohydrates via glycolysis.</text>
</comment>
<comment type="catalytic activity">
    <reaction evidence="1">
        <text>(2R)-2-phosphoglycerate = phosphoenolpyruvate + H2O</text>
        <dbReference type="Rhea" id="RHEA:10164"/>
        <dbReference type="ChEBI" id="CHEBI:15377"/>
        <dbReference type="ChEBI" id="CHEBI:58289"/>
        <dbReference type="ChEBI" id="CHEBI:58702"/>
        <dbReference type="EC" id="4.2.1.11"/>
    </reaction>
</comment>
<comment type="cofactor">
    <cofactor evidence="1">
        <name>Mg(2+)</name>
        <dbReference type="ChEBI" id="CHEBI:18420"/>
    </cofactor>
    <text evidence="1">Binds a second Mg(2+) ion via substrate during catalysis.</text>
</comment>
<comment type="pathway">
    <text evidence="1">Carbohydrate degradation; glycolysis; pyruvate from D-glyceraldehyde 3-phosphate: step 4/5.</text>
</comment>
<comment type="subcellular location">
    <subcellularLocation>
        <location evidence="1">Cytoplasm</location>
    </subcellularLocation>
    <subcellularLocation>
        <location evidence="1">Secreted</location>
    </subcellularLocation>
    <subcellularLocation>
        <location evidence="1">Cell surface</location>
    </subcellularLocation>
    <text evidence="1">Fractions of enolase are present in both the cytoplasm and on the cell surface.</text>
</comment>
<comment type="similarity">
    <text evidence="1">Belongs to the enolase family.</text>
</comment>
<name>ENO_PETMO</name>
<gene>
    <name evidence="1" type="primary">eno</name>
    <name type="ordered locus">Pmob_1722</name>
</gene>
<accession>A9BIS7</accession>
<feature type="chain" id="PRO_0000337617" description="Enolase">
    <location>
        <begin position="1"/>
        <end position="432"/>
    </location>
</feature>
<feature type="active site" description="Proton donor" evidence="1">
    <location>
        <position position="209"/>
    </location>
</feature>
<feature type="active site" description="Proton acceptor" evidence="1">
    <location>
        <position position="341"/>
    </location>
</feature>
<feature type="binding site" evidence="1">
    <location>
        <position position="167"/>
    </location>
    <ligand>
        <name>(2R)-2-phosphoglycerate</name>
        <dbReference type="ChEBI" id="CHEBI:58289"/>
    </ligand>
</feature>
<feature type="binding site" evidence="1">
    <location>
        <position position="246"/>
    </location>
    <ligand>
        <name>Mg(2+)</name>
        <dbReference type="ChEBI" id="CHEBI:18420"/>
    </ligand>
</feature>
<feature type="binding site" evidence="1">
    <location>
        <position position="289"/>
    </location>
    <ligand>
        <name>Mg(2+)</name>
        <dbReference type="ChEBI" id="CHEBI:18420"/>
    </ligand>
</feature>
<feature type="binding site" evidence="1">
    <location>
        <position position="316"/>
    </location>
    <ligand>
        <name>Mg(2+)</name>
        <dbReference type="ChEBI" id="CHEBI:18420"/>
    </ligand>
</feature>
<feature type="binding site" evidence="1">
    <location>
        <position position="341"/>
    </location>
    <ligand>
        <name>(2R)-2-phosphoglycerate</name>
        <dbReference type="ChEBI" id="CHEBI:58289"/>
    </ligand>
</feature>
<feature type="binding site" evidence="1">
    <location>
        <position position="370"/>
    </location>
    <ligand>
        <name>(2R)-2-phosphoglycerate</name>
        <dbReference type="ChEBI" id="CHEBI:58289"/>
    </ligand>
</feature>
<feature type="binding site" evidence="1">
    <location>
        <position position="371"/>
    </location>
    <ligand>
        <name>(2R)-2-phosphoglycerate</name>
        <dbReference type="ChEBI" id="CHEBI:58289"/>
    </ligand>
</feature>
<feature type="binding site" evidence="1">
    <location>
        <position position="392"/>
    </location>
    <ligand>
        <name>(2R)-2-phosphoglycerate</name>
        <dbReference type="ChEBI" id="CHEBI:58289"/>
    </ligand>
</feature>
<sequence length="432" mass="47136">MEKFYDEIVSVKAREVLDSRGNPTVEAEVTLSTGVTGSAIVPSGASTGKFEALELRDGNKDYYMGKGVTKAVNNVNNIIEQEVVGLNAFDQVNVDRVMLDLDGTENKENLGANAILAVSMAAARAAANSLGLPLYKYLGGVNAKVLPVPMMNIINGGQHADNNLDIQEFMIMPAGFNSFKDALRAGAEVFHNLKNILKKEGHITSVGDEGGFAPNLNSNEEAIKYIIRAIQAAGYEPGKQIFIAMDAAASEFYNEETKKYSVDGKEMSAAELAEYYISLIDKYPIKSLEDPFDQDDWEGYSEFTAKVGDRVQIVGDDLYVTNVKRLQKGIDLKATNSILIKLNQIGSVTETLDAIELAYKNNMTAVVSHRSGETEDSFIADLVVAVNAGFIKTGSLSRTDRIAKYNQLLRIEDELGSTAQYRGLNAFYSIKK</sequence>
<keyword id="KW-0963">Cytoplasm</keyword>
<keyword id="KW-0324">Glycolysis</keyword>
<keyword id="KW-0456">Lyase</keyword>
<keyword id="KW-0460">Magnesium</keyword>
<keyword id="KW-0479">Metal-binding</keyword>
<keyword id="KW-0964">Secreted</keyword>
<dbReference type="EC" id="4.2.1.11" evidence="1"/>
<dbReference type="EMBL" id="CP000879">
    <property type="protein sequence ID" value="ABX32415.1"/>
    <property type="molecule type" value="Genomic_DNA"/>
</dbReference>
<dbReference type="RefSeq" id="WP_012209512.1">
    <property type="nucleotide sequence ID" value="NC_010003.1"/>
</dbReference>
<dbReference type="SMR" id="A9BIS7"/>
<dbReference type="STRING" id="403833.Pmob_1722"/>
<dbReference type="KEGG" id="pmo:Pmob_1722"/>
<dbReference type="eggNOG" id="COG0148">
    <property type="taxonomic scope" value="Bacteria"/>
</dbReference>
<dbReference type="HOGENOM" id="CLU_031223_2_1_0"/>
<dbReference type="OrthoDB" id="9804716at2"/>
<dbReference type="UniPathway" id="UPA00109">
    <property type="reaction ID" value="UER00187"/>
</dbReference>
<dbReference type="Proteomes" id="UP000000789">
    <property type="component" value="Chromosome"/>
</dbReference>
<dbReference type="GO" id="GO:0009986">
    <property type="term" value="C:cell surface"/>
    <property type="evidence" value="ECO:0007669"/>
    <property type="project" value="UniProtKB-SubCell"/>
</dbReference>
<dbReference type="GO" id="GO:0005576">
    <property type="term" value="C:extracellular region"/>
    <property type="evidence" value="ECO:0007669"/>
    <property type="project" value="UniProtKB-SubCell"/>
</dbReference>
<dbReference type="GO" id="GO:0000015">
    <property type="term" value="C:phosphopyruvate hydratase complex"/>
    <property type="evidence" value="ECO:0007669"/>
    <property type="project" value="InterPro"/>
</dbReference>
<dbReference type="GO" id="GO:0000287">
    <property type="term" value="F:magnesium ion binding"/>
    <property type="evidence" value="ECO:0007669"/>
    <property type="project" value="UniProtKB-UniRule"/>
</dbReference>
<dbReference type="GO" id="GO:0004634">
    <property type="term" value="F:phosphopyruvate hydratase activity"/>
    <property type="evidence" value="ECO:0007669"/>
    <property type="project" value="UniProtKB-UniRule"/>
</dbReference>
<dbReference type="GO" id="GO:0006096">
    <property type="term" value="P:glycolytic process"/>
    <property type="evidence" value="ECO:0007669"/>
    <property type="project" value="UniProtKB-UniRule"/>
</dbReference>
<dbReference type="CDD" id="cd03313">
    <property type="entry name" value="enolase"/>
    <property type="match status" value="1"/>
</dbReference>
<dbReference type="FunFam" id="3.20.20.120:FF:000001">
    <property type="entry name" value="Enolase"/>
    <property type="match status" value="1"/>
</dbReference>
<dbReference type="FunFam" id="3.30.390.10:FF:000001">
    <property type="entry name" value="Enolase"/>
    <property type="match status" value="1"/>
</dbReference>
<dbReference type="Gene3D" id="3.20.20.120">
    <property type="entry name" value="Enolase-like C-terminal domain"/>
    <property type="match status" value="1"/>
</dbReference>
<dbReference type="Gene3D" id="3.30.390.10">
    <property type="entry name" value="Enolase-like, N-terminal domain"/>
    <property type="match status" value="1"/>
</dbReference>
<dbReference type="HAMAP" id="MF_00318">
    <property type="entry name" value="Enolase"/>
    <property type="match status" value="1"/>
</dbReference>
<dbReference type="InterPro" id="IPR000941">
    <property type="entry name" value="Enolase"/>
</dbReference>
<dbReference type="InterPro" id="IPR036849">
    <property type="entry name" value="Enolase-like_C_sf"/>
</dbReference>
<dbReference type="InterPro" id="IPR029017">
    <property type="entry name" value="Enolase-like_N"/>
</dbReference>
<dbReference type="InterPro" id="IPR020810">
    <property type="entry name" value="Enolase_C"/>
</dbReference>
<dbReference type="InterPro" id="IPR020809">
    <property type="entry name" value="Enolase_CS"/>
</dbReference>
<dbReference type="InterPro" id="IPR020811">
    <property type="entry name" value="Enolase_N"/>
</dbReference>
<dbReference type="NCBIfam" id="TIGR01060">
    <property type="entry name" value="eno"/>
    <property type="match status" value="1"/>
</dbReference>
<dbReference type="PANTHER" id="PTHR11902">
    <property type="entry name" value="ENOLASE"/>
    <property type="match status" value="1"/>
</dbReference>
<dbReference type="PANTHER" id="PTHR11902:SF1">
    <property type="entry name" value="ENOLASE"/>
    <property type="match status" value="1"/>
</dbReference>
<dbReference type="Pfam" id="PF00113">
    <property type="entry name" value="Enolase_C"/>
    <property type="match status" value="1"/>
</dbReference>
<dbReference type="Pfam" id="PF03952">
    <property type="entry name" value="Enolase_N"/>
    <property type="match status" value="1"/>
</dbReference>
<dbReference type="PIRSF" id="PIRSF001400">
    <property type="entry name" value="Enolase"/>
    <property type="match status" value="1"/>
</dbReference>
<dbReference type="PRINTS" id="PR00148">
    <property type="entry name" value="ENOLASE"/>
</dbReference>
<dbReference type="SFLD" id="SFLDS00001">
    <property type="entry name" value="Enolase"/>
    <property type="match status" value="1"/>
</dbReference>
<dbReference type="SFLD" id="SFLDF00002">
    <property type="entry name" value="enolase"/>
    <property type="match status" value="1"/>
</dbReference>
<dbReference type="SMART" id="SM01192">
    <property type="entry name" value="Enolase_C"/>
    <property type="match status" value="1"/>
</dbReference>
<dbReference type="SMART" id="SM01193">
    <property type="entry name" value="Enolase_N"/>
    <property type="match status" value="1"/>
</dbReference>
<dbReference type="SUPFAM" id="SSF51604">
    <property type="entry name" value="Enolase C-terminal domain-like"/>
    <property type="match status" value="1"/>
</dbReference>
<dbReference type="SUPFAM" id="SSF54826">
    <property type="entry name" value="Enolase N-terminal domain-like"/>
    <property type="match status" value="1"/>
</dbReference>
<dbReference type="PROSITE" id="PS00164">
    <property type="entry name" value="ENOLASE"/>
    <property type="match status" value="1"/>
</dbReference>
<evidence type="ECO:0000255" key="1">
    <source>
        <dbReference type="HAMAP-Rule" id="MF_00318"/>
    </source>
</evidence>
<proteinExistence type="inferred from homology"/>